<feature type="signal peptide" evidence="1">
    <location>
        <begin position="1"/>
        <end position="20"/>
    </location>
</feature>
<feature type="propeptide" id="PRO_0000007038" evidence="7">
    <location>
        <begin position="21"/>
        <end position="26"/>
    </location>
</feature>
<feature type="chain" id="PRO_0000007039" description="Drosomycin">
    <location>
        <begin position="27"/>
        <end position="70"/>
    </location>
</feature>
<feature type="glycosylation site" description="N-linked (GlcNAc...) asparagine" evidence="2">
    <location>
        <position position="42"/>
    </location>
</feature>
<feature type="disulfide bond">
    <location>
        <begin position="28"/>
        <end position="70"/>
    </location>
</feature>
<feature type="disulfide bond">
    <location>
        <begin position="37"/>
        <end position="59"/>
    </location>
</feature>
<feature type="disulfide bond">
    <location>
        <begin position="45"/>
        <end position="65"/>
    </location>
</feature>
<feature type="disulfide bond">
    <location>
        <begin position="49"/>
        <end position="67"/>
    </location>
</feature>
<feature type="turn" evidence="11">
    <location>
        <begin position="39"/>
        <end position="41"/>
    </location>
</feature>
<feature type="helix" evidence="11">
    <location>
        <begin position="42"/>
        <end position="52"/>
    </location>
</feature>
<feature type="strand" evidence="11">
    <location>
        <begin position="54"/>
        <end position="60"/>
    </location>
</feature>
<feature type="turn" evidence="11">
    <location>
        <begin position="61"/>
        <end position="63"/>
    </location>
</feature>
<feature type="strand" evidence="11">
    <location>
        <begin position="64"/>
        <end position="68"/>
    </location>
</feature>
<protein>
    <recommendedName>
        <fullName>Drosomycin</fullName>
    </recommendedName>
    <alternativeName>
        <fullName>Cysteine-rich peptide</fullName>
    </alternativeName>
</protein>
<keyword id="KW-0002">3D-structure</keyword>
<keyword id="KW-0929">Antimicrobial</keyword>
<keyword id="KW-0903">Direct protein sequencing</keyword>
<keyword id="KW-1015">Disulfide bond</keyword>
<keyword id="KW-0295">Fungicide</keyword>
<keyword id="KW-0325">Glycoprotein</keyword>
<keyword id="KW-1185">Reference proteome</keyword>
<keyword id="KW-0964">Secreted</keyword>
<keyword id="KW-0732">Signal</keyword>
<proteinExistence type="evidence at protein level"/>
<gene>
    <name type="primary">Drs</name>
    <name type="synonym">CRP</name>
    <name type="ORF">CG10810</name>
</gene>
<sequence>MMQIKYLFALFAVLMLVVLGANEADADCLSGRYKGPCAVWDNETCRRVCKEEGRSSGHCSPSLKCWCEGC</sequence>
<reference key="1">
    <citation type="journal article" date="1994" name="J. Biol. Chem.">
        <title>Insect immunity. Septic injury of Drosophila induces the synthesis of a potent antifungal peptide with sequence homology to plant antifungal peptides.</title>
        <authorList>
            <person name="Fehlbaum P."/>
            <person name="Bulet P."/>
            <person name="Michaut L."/>
            <person name="Lagueux M."/>
            <person name="Broekaert W.F."/>
            <person name="Hetru C."/>
            <person name="Hoffmann J.A."/>
        </authorList>
    </citation>
    <scope>NUCLEOTIDE SEQUENCE [MRNA]</scope>
    <scope>PROTEIN SEQUENCE OF 27-70</scope>
    <scope>FUNCTION</scope>
    <source>
        <strain>Oregon-R</strain>
    </source>
</reference>
<reference key="2">
    <citation type="journal article" date="2005" name="Genetics">
        <title>The evolution of antifungal peptides in Drosophila.</title>
        <authorList>
            <person name="Jiggins F.M."/>
            <person name="Kim K.W."/>
        </authorList>
    </citation>
    <scope>NUCLEOTIDE SEQUENCE [GENOMIC DNA]</scope>
    <source>
        <strain>G125</strain>
        <strain>G128</strain>
        <strain>G130</strain>
        <strain>G140</strain>
        <strain>G141</strain>
        <strain>G179</strain>
        <strain>G185</strain>
        <strain>G187</strain>
        <strain>KY258</strain>
        <strain>N01</strain>
        <strain>N02</strain>
        <strain>N03</strain>
        <strain>N06</strain>
        <strain>N07</strain>
        <strain>N14</strain>
        <strain>N15</strain>
        <strain>N16</strain>
        <strain>N17</strain>
        <strain>N22</strain>
        <strain>N29</strain>
        <strain>N30</strain>
    </source>
</reference>
<reference key="3">
    <citation type="journal article" date="2000" name="Science">
        <title>The genome sequence of Drosophila melanogaster.</title>
        <authorList>
            <person name="Adams M.D."/>
            <person name="Celniker S.E."/>
            <person name="Holt R.A."/>
            <person name="Evans C.A."/>
            <person name="Gocayne J.D."/>
            <person name="Amanatides P.G."/>
            <person name="Scherer S.E."/>
            <person name="Li P.W."/>
            <person name="Hoskins R.A."/>
            <person name="Galle R.F."/>
            <person name="George R.A."/>
            <person name="Lewis S.E."/>
            <person name="Richards S."/>
            <person name="Ashburner M."/>
            <person name="Henderson S.N."/>
            <person name="Sutton G.G."/>
            <person name="Wortman J.R."/>
            <person name="Yandell M.D."/>
            <person name="Zhang Q."/>
            <person name="Chen L.X."/>
            <person name="Brandon R.C."/>
            <person name="Rogers Y.-H.C."/>
            <person name="Blazej R.G."/>
            <person name="Champe M."/>
            <person name="Pfeiffer B.D."/>
            <person name="Wan K.H."/>
            <person name="Doyle C."/>
            <person name="Baxter E.G."/>
            <person name="Helt G."/>
            <person name="Nelson C.R."/>
            <person name="Miklos G.L.G."/>
            <person name="Abril J.F."/>
            <person name="Agbayani A."/>
            <person name="An H.-J."/>
            <person name="Andrews-Pfannkoch C."/>
            <person name="Baldwin D."/>
            <person name="Ballew R.M."/>
            <person name="Basu A."/>
            <person name="Baxendale J."/>
            <person name="Bayraktaroglu L."/>
            <person name="Beasley E.M."/>
            <person name="Beeson K.Y."/>
            <person name="Benos P.V."/>
            <person name="Berman B.P."/>
            <person name="Bhandari D."/>
            <person name="Bolshakov S."/>
            <person name="Borkova D."/>
            <person name="Botchan M.R."/>
            <person name="Bouck J."/>
            <person name="Brokstein P."/>
            <person name="Brottier P."/>
            <person name="Burtis K.C."/>
            <person name="Busam D.A."/>
            <person name="Butler H."/>
            <person name="Cadieu E."/>
            <person name="Center A."/>
            <person name="Chandra I."/>
            <person name="Cherry J.M."/>
            <person name="Cawley S."/>
            <person name="Dahlke C."/>
            <person name="Davenport L.B."/>
            <person name="Davies P."/>
            <person name="de Pablos B."/>
            <person name="Delcher A."/>
            <person name="Deng Z."/>
            <person name="Mays A.D."/>
            <person name="Dew I."/>
            <person name="Dietz S.M."/>
            <person name="Dodson K."/>
            <person name="Doup L.E."/>
            <person name="Downes M."/>
            <person name="Dugan-Rocha S."/>
            <person name="Dunkov B.C."/>
            <person name="Dunn P."/>
            <person name="Durbin K.J."/>
            <person name="Evangelista C.C."/>
            <person name="Ferraz C."/>
            <person name="Ferriera S."/>
            <person name="Fleischmann W."/>
            <person name="Fosler C."/>
            <person name="Gabrielian A.E."/>
            <person name="Garg N.S."/>
            <person name="Gelbart W.M."/>
            <person name="Glasser K."/>
            <person name="Glodek A."/>
            <person name="Gong F."/>
            <person name="Gorrell J.H."/>
            <person name="Gu Z."/>
            <person name="Guan P."/>
            <person name="Harris M."/>
            <person name="Harris N.L."/>
            <person name="Harvey D.A."/>
            <person name="Heiman T.J."/>
            <person name="Hernandez J.R."/>
            <person name="Houck J."/>
            <person name="Hostin D."/>
            <person name="Houston K.A."/>
            <person name="Howland T.J."/>
            <person name="Wei M.-H."/>
            <person name="Ibegwam C."/>
            <person name="Jalali M."/>
            <person name="Kalush F."/>
            <person name="Karpen G.H."/>
            <person name="Ke Z."/>
            <person name="Kennison J.A."/>
            <person name="Ketchum K.A."/>
            <person name="Kimmel B.E."/>
            <person name="Kodira C.D."/>
            <person name="Kraft C.L."/>
            <person name="Kravitz S."/>
            <person name="Kulp D."/>
            <person name="Lai Z."/>
            <person name="Lasko P."/>
            <person name="Lei Y."/>
            <person name="Levitsky A.A."/>
            <person name="Li J.H."/>
            <person name="Li Z."/>
            <person name="Liang Y."/>
            <person name="Lin X."/>
            <person name="Liu X."/>
            <person name="Mattei B."/>
            <person name="McIntosh T.C."/>
            <person name="McLeod M.P."/>
            <person name="McPherson D."/>
            <person name="Merkulov G."/>
            <person name="Milshina N.V."/>
            <person name="Mobarry C."/>
            <person name="Morris J."/>
            <person name="Moshrefi A."/>
            <person name="Mount S.M."/>
            <person name="Moy M."/>
            <person name="Murphy B."/>
            <person name="Murphy L."/>
            <person name="Muzny D.M."/>
            <person name="Nelson D.L."/>
            <person name="Nelson D.R."/>
            <person name="Nelson K.A."/>
            <person name="Nixon K."/>
            <person name="Nusskern D.R."/>
            <person name="Pacleb J.M."/>
            <person name="Palazzolo M."/>
            <person name="Pittman G.S."/>
            <person name="Pan S."/>
            <person name="Pollard J."/>
            <person name="Puri V."/>
            <person name="Reese M.G."/>
            <person name="Reinert K."/>
            <person name="Remington K."/>
            <person name="Saunders R.D.C."/>
            <person name="Scheeler F."/>
            <person name="Shen H."/>
            <person name="Shue B.C."/>
            <person name="Siden-Kiamos I."/>
            <person name="Simpson M."/>
            <person name="Skupski M.P."/>
            <person name="Smith T.J."/>
            <person name="Spier E."/>
            <person name="Spradling A.C."/>
            <person name="Stapleton M."/>
            <person name="Strong R."/>
            <person name="Sun E."/>
            <person name="Svirskas R."/>
            <person name="Tector C."/>
            <person name="Turner R."/>
            <person name="Venter E."/>
            <person name="Wang A.H."/>
            <person name="Wang X."/>
            <person name="Wang Z.-Y."/>
            <person name="Wassarman D.A."/>
            <person name="Weinstock G.M."/>
            <person name="Weissenbach J."/>
            <person name="Williams S.M."/>
            <person name="Woodage T."/>
            <person name="Worley K.C."/>
            <person name="Wu D."/>
            <person name="Yang S."/>
            <person name="Yao Q.A."/>
            <person name="Ye J."/>
            <person name="Yeh R.-F."/>
            <person name="Zaveri J.S."/>
            <person name="Zhan M."/>
            <person name="Zhang G."/>
            <person name="Zhao Q."/>
            <person name="Zheng L."/>
            <person name="Zheng X.H."/>
            <person name="Zhong F.N."/>
            <person name="Zhong W."/>
            <person name="Zhou X."/>
            <person name="Zhu S.C."/>
            <person name="Zhu X."/>
            <person name="Smith H.O."/>
            <person name="Gibbs R.A."/>
            <person name="Myers E.W."/>
            <person name="Rubin G.M."/>
            <person name="Venter J.C."/>
        </authorList>
    </citation>
    <scope>NUCLEOTIDE SEQUENCE [LARGE SCALE GENOMIC DNA]</scope>
    <source>
        <strain>Berkeley</strain>
    </source>
</reference>
<reference key="4">
    <citation type="journal article" date="2002" name="Genome Biol.">
        <title>Annotation of the Drosophila melanogaster euchromatic genome: a systematic review.</title>
        <authorList>
            <person name="Misra S."/>
            <person name="Crosby M.A."/>
            <person name="Mungall C.J."/>
            <person name="Matthews B.B."/>
            <person name="Campbell K.S."/>
            <person name="Hradecky P."/>
            <person name="Huang Y."/>
            <person name="Kaminker J.S."/>
            <person name="Millburn G.H."/>
            <person name="Prochnik S.E."/>
            <person name="Smith C.D."/>
            <person name="Tupy J.L."/>
            <person name="Whitfield E.J."/>
            <person name="Bayraktaroglu L."/>
            <person name="Berman B.P."/>
            <person name="Bettencourt B.R."/>
            <person name="Celniker S.E."/>
            <person name="de Grey A.D.N.J."/>
            <person name="Drysdale R.A."/>
            <person name="Harris N.L."/>
            <person name="Richter J."/>
            <person name="Russo S."/>
            <person name="Schroeder A.J."/>
            <person name="Shu S.Q."/>
            <person name="Stapleton M."/>
            <person name="Yamada C."/>
            <person name="Ashburner M."/>
            <person name="Gelbart W.M."/>
            <person name="Rubin G.M."/>
            <person name="Lewis S.E."/>
        </authorList>
    </citation>
    <scope>GENOME REANNOTATION</scope>
    <source>
        <strain>Berkeley</strain>
    </source>
</reference>
<reference key="5">
    <citation type="journal article" date="2002" name="Genome Biol.">
        <title>A Drosophila full-length cDNA resource.</title>
        <authorList>
            <person name="Stapleton M."/>
            <person name="Carlson J.W."/>
            <person name="Brokstein P."/>
            <person name="Yu C."/>
            <person name="Champe M."/>
            <person name="George R.A."/>
            <person name="Guarin H."/>
            <person name="Kronmiller B."/>
            <person name="Pacleb J.M."/>
            <person name="Park S."/>
            <person name="Wan K.H."/>
            <person name="Rubin G.M."/>
            <person name="Celniker S.E."/>
        </authorList>
    </citation>
    <scope>NUCLEOTIDE SEQUENCE [LARGE SCALE MRNA]</scope>
    <source>
        <strain>Berkeley</strain>
        <tissue>Larva</tissue>
        <tissue>Pupae</tissue>
    </source>
</reference>
<reference key="6">
    <citation type="journal article" date="1996" name="Cell">
        <title>The dorsoventral regulatory gene cassette spatzle/Toll/cactus controls the potent antifungal response in Drosophila adults.</title>
        <authorList>
            <person name="Lemaitre B."/>
            <person name="Nicolas E."/>
            <person name="Michaut L."/>
            <person name="Reichhart J.-M."/>
            <person name="Hoffmann J.A."/>
        </authorList>
    </citation>
    <scope>FUNCTION</scope>
</reference>
<reference key="7">
    <citation type="journal article" date="1998" name="Proc. Natl. Acad. Sci. U.S.A.">
        <title>Differential display of peptides induced during the immune response of Drosophila: a matrix-assisted laser desorption ionization time-of-flight mass spectrometry study.</title>
        <authorList>
            <person name="Uttenweiler-Joseph S."/>
            <person name="Moniatte M."/>
            <person name="Lagueux M."/>
            <person name="van Dorsselaer A."/>
            <person name="Hoffmann J.A."/>
            <person name="Bulet P."/>
        </authorList>
    </citation>
    <scope>SUBCELLULAR LOCATION</scope>
    <scope>TISSUE SPECIFICITY</scope>
    <scope>INDUCTION BY BACTERIA</scope>
    <scope>MASS SPECTROMETRY</scope>
    <source>
        <strain evidence="10">Oregon-R</strain>
        <tissue evidence="10">Hemolymph</tissue>
    </source>
</reference>
<reference key="8">
    <citation type="journal article" date="2003" name="Nat. Immunol.">
        <title>Binding of the Drosophila cytokine Spatzle to Toll is direct and establishes signaling.</title>
        <authorList>
            <person name="Weber A.N."/>
            <person name="Tauszig-Delamasure S."/>
            <person name="Hoffmann J.A."/>
            <person name="Lelievre E."/>
            <person name="Gascan H."/>
            <person name="Ray K.P."/>
            <person name="Morse M.A."/>
            <person name="Imler J.L."/>
            <person name="Gay N.J."/>
        </authorList>
    </citation>
    <scope>FUNCTION</scope>
</reference>
<reference key="9">
    <citation type="journal article" date="2011" name="PLoS Pathog.">
        <title>Toll-8/Tollo negatively regulates antimicrobial response in the Drosophila respiratory epithelium.</title>
        <authorList>
            <person name="Akhouayri I."/>
            <person name="Turc C."/>
            <person name="Royet J."/>
            <person name="Charroux B."/>
        </authorList>
    </citation>
    <scope>TISSUE SPECIFICITY</scope>
    <scope>INDUCTION BY BACTERIA</scope>
</reference>
<reference key="10">
    <citation type="journal article" date="1997" name="Protein Sci.">
        <title>Solution structure of drosomycin, the first inducible antifungal protein from insects.</title>
        <authorList>
            <person name="Landon C."/>
            <person name="Sodano P."/>
            <person name="Hetru C."/>
            <person name="Hoffmann J.A."/>
            <person name="Ptak M."/>
        </authorList>
    </citation>
    <scope>STRUCTURE BY NMR</scope>
</reference>
<reference key="11">
    <citation type="journal article" date="2008" name="Dev. Cell">
        <title>A serpin that regulates immune melanization in the respiratory system of Drosophila.</title>
        <authorList>
            <person name="Tang H."/>
            <person name="Kambris Z."/>
            <person name="Lemaitre B."/>
            <person name="Hashimoto C."/>
        </authorList>
    </citation>
    <scope>FUNCTION</scope>
    <scope>INDUCTION BY MELANIZATION</scope>
</reference>
<reference key="12">
    <citation type="journal article" date="2009" name="Proc. Natl. Acad. Sci. U.S.A.">
        <title>A single modular serine protease integrates signals from pattern-recognition receptors upstream of the Drosophila Toll pathway.</title>
        <authorList>
            <person name="Buchon N."/>
            <person name="Poidevin M."/>
            <person name="Kwon H.M."/>
            <person name="Guillou A."/>
            <person name="Sottas V."/>
            <person name="Lee B.L."/>
            <person name="Lemaitre B."/>
        </authorList>
    </citation>
    <scope>INDUCTION BY GRAM-POSITIVE BACTERIA AND FUNGI</scope>
</reference>
<evidence type="ECO:0000255" key="1"/>
<evidence type="ECO:0000255" key="2">
    <source>
        <dbReference type="PROSITE-ProRule" id="PRU00498"/>
    </source>
</evidence>
<evidence type="ECO:0000269" key="3">
    <source>
    </source>
</evidence>
<evidence type="ECO:0000269" key="4">
    <source>
    </source>
</evidence>
<evidence type="ECO:0000269" key="5">
    <source>
    </source>
</evidence>
<evidence type="ECO:0000269" key="6">
    <source>
    </source>
</evidence>
<evidence type="ECO:0000269" key="7">
    <source>
    </source>
</evidence>
<evidence type="ECO:0000269" key="8">
    <source>
    </source>
</evidence>
<evidence type="ECO:0000269" key="9">
    <source>
    </source>
</evidence>
<evidence type="ECO:0000303" key="10">
    <source>
    </source>
</evidence>
<evidence type="ECO:0007829" key="11">
    <source>
        <dbReference type="PDB" id="1MYN"/>
    </source>
</evidence>
<accession>P41964</accession>
<accession>Q2UYN5</accession>
<accession>Q9VZQ2</accession>
<name>DMYC_DROME</name>
<dbReference type="EMBL" id="X75595">
    <property type="protein sequence ID" value="CAA53267.1"/>
    <property type="molecule type" value="mRNA"/>
</dbReference>
<dbReference type="EMBL" id="AJ885056">
    <property type="protein sequence ID" value="CAI76995.1"/>
    <property type="molecule type" value="Genomic_DNA"/>
</dbReference>
<dbReference type="EMBL" id="AJ885057">
    <property type="protein sequence ID" value="CAI77002.1"/>
    <property type="molecule type" value="Genomic_DNA"/>
</dbReference>
<dbReference type="EMBL" id="AJ885058">
    <property type="protein sequence ID" value="CAI77009.1"/>
    <property type="molecule type" value="Genomic_DNA"/>
</dbReference>
<dbReference type="EMBL" id="AJ885059">
    <property type="protein sequence ID" value="CAI77016.1"/>
    <property type="molecule type" value="Genomic_DNA"/>
</dbReference>
<dbReference type="EMBL" id="AJ885060">
    <property type="protein sequence ID" value="CAI77023.1"/>
    <property type="molecule type" value="Genomic_DNA"/>
</dbReference>
<dbReference type="EMBL" id="AJ885061">
    <property type="protein sequence ID" value="CAI77030.1"/>
    <property type="molecule type" value="Genomic_DNA"/>
</dbReference>
<dbReference type="EMBL" id="AJ885062">
    <property type="protein sequence ID" value="CAI77037.1"/>
    <property type="molecule type" value="Genomic_DNA"/>
</dbReference>
<dbReference type="EMBL" id="AJ885063">
    <property type="protein sequence ID" value="CAI77044.1"/>
    <property type="molecule type" value="Genomic_DNA"/>
</dbReference>
<dbReference type="EMBL" id="AJ885064">
    <property type="protein sequence ID" value="CAI77051.1"/>
    <property type="molecule type" value="Genomic_DNA"/>
</dbReference>
<dbReference type="EMBL" id="AJ885065">
    <property type="protein sequence ID" value="CAI77058.1"/>
    <property type="molecule type" value="Genomic_DNA"/>
</dbReference>
<dbReference type="EMBL" id="AJ885066">
    <property type="protein sequence ID" value="CAI77065.1"/>
    <property type="molecule type" value="Genomic_DNA"/>
</dbReference>
<dbReference type="EMBL" id="AJ885067">
    <property type="protein sequence ID" value="CAI77072.1"/>
    <property type="molecule type" value="Genomic_DNA"/>
</dbReference>
<dbReference type="EMBL" id="AJ885068">
    <property type="protein sequence ID" value="CAI77079.1"/>
    <property type="molecule type" value="Genomic_DNA"/>
</dbReference>
<dbReference type="EMBL" id="AJ885069">
    <property type="protein sequence ID" value="CAI77086.1"/>
    <property type="molecule type" value="Genomic_DNA"/>
</dbReference>
<dbReference type="EMBL" id="AJ885070">
    <property type="protein sequence ID" value="CAI77093.1"/>
    <property type="molecule type" value="Genomic_DNA"/>
</dbReference>
<dbReference type="EMBL" id="AJ885071">
    <property type="protein sequence ID" value="CAI77100.1"/>
    <property type="molecule type" value="Genomic_DNA"/>
</dbReference>
<dbReference type="EMBL" id="AJ885072">
    <property type="protein sequence ID" value="CAI77107.1"/>
    <property type="molecule type" value="Genomic_DNA"/>
</dbReference>
<dbReference type="EMBL" id="AJ885073">
    <property type="protein sequence ID" value="CAI77114.1"/>
    <property type="molecule type" value="Genomic_DNA"/>
</dbReference>
<dbReference type="EMBL" id="AJ885074">
    <property type="protein sequence ID" value="CAI77121.1"/>
    <property type="molecule type" value="Genomic_DNA"/>
</dbReference>
<dbReference type="EMBL" id="AJ885075">
    <property type="protein sequence ID" value="CAI77128.1"/>
    <property type="molecule type" value="Genomic_DNA"/>
</dbReference>
<dbReference type="EMBL" id="AJ885086">
    <property type="protein sequence ID" value="CAI77205.1"/>
    <property type="molecule type" value="Genomic_DNA"/>
</dbReference>
<dbReference type="EMBL" id="AE014296">
    <property type="protein sequence ID" value="AAF47767.2"/>
    <property type="molecule type" value="Genomic_DNA"/>
</dbReference>
<dbReference type="EMBL" id="AY119009">
    <property type="protein sequence ID" value="AAM50869.1"/>
    <property type="molecule type" value="mRNA"/>
</dbReference>
<dbReference type="PIR" id="A55824">
    <property type="entry name" value="A55824"/>
</dbReference>
<dbReference type="RefSeq" id="NP_523901.1">
    <property type="nucleotide sequence ID" value="NM_079177.4"/>
</dbReference>
<dbReference type="PDB" id="1MYN">
    <property type="method" value="NMR"/>
    <property type="chains" value="A=27-70"/>
</dbReference>
<dbReference type="PDBsum" id="1MYN"/>
<dbReference type="SMR" id="P41964"/>
<dbReference type="BioGRID" id="63914">
    <property type="interactions" value="3"/>
</dbReference>
<dbReference type="DIP" id="DIP-18879N"/>
<dbReference type="FunCoup" id="P41964">
    <property type="interactions" value="81"/>
</dbReference>
<dbReference type="IntAct" id="P41964">
    <property type="interactions" value="3"/>
</dbReference>
<dbReference type="STRING" id="7227.FBpp0072935"/>
<dbReference type="TCDB" id="8.B.1.1.9">
    <property type="family name" value="the long (4c-c) scorpion toxin (l-st) superfamily"/>
</dbReference>
<dbReference type="GlyCosmos" id="P41964">
    <property type="glycosylation" value="1 site, No reported glycans"/>
</dbReference>
<dbReference type="GlyGen" id="P41964">
    <property type="glycosylation" value="1 site"/>
</dbReference>
<dbReference type="PaxDb" id="7227-FBpp0072935"/>
<dbReference type="DNASU" id="38419"/>
<dbReference type="EnsemblMetazoa" id="FBtr0073073">
    <property type="protein sequence ID" value="FBpp0072935"/>
    <property type="gene ID" value="FBgn0283461"/>
</dbReference>
<dbReference type="GeneID" id="38419"/>
<dbReference type="KEGG" id="dme:Dmel_CG10810"/>
<dbReference type="AGR" id="FB:FBgn0283461"/>
<dbReference type="CTD" id="38419"/>
<dbReference type="FlyBase" id="FBgn0283461">
    <property type="gene designation" value="Drs"/>
</dbReference>
<dbReference type="VEuPathDB" id="VectorBase:FBgn0283461"/>
<dbReference type="GeneTree" id="ENSGT00940000176294"/>
<dbReference type="HOGENOM" id="CLU_2760455_0_0_1"/>
<dbReference type="InParanoid" id="P41964"/>
<dbReference type="OMA" id="CAVWDHE"/>
<dbReference type="OrthoDB" id="7800919at2759"/>
<dbReference type="PhylomeDB" id="P41964"/>
<dbReference type="BioGRID-ORCS" id="38419">
    <property type="hits" value="1 hit in 1 CRISPR screen"/>
</dbReference>
<dbReference type="EvolutionaryTrace" id="P41964"/>
<dbReference type="GenomeRNAi" id="38419"/>
<dbReference type="PRO" id="PR:P41964"/>
<dbReference type="Proteomes" id="UP000000803">
    <property type="component" value="Chromosome 3L"/>
</dbReference>
<dbReference type="Bgee" id="FBgn0283461">
    <property type="expression patterns" value="Expressed in spermathecum and 113 other cell types or tissues"/>
</dbReference>
<dbReference type="ExpressionAtlas" id="P41964">
    <property type="expression patterns" value="baseline and differential"/>
</dbReference>
<dbReference type="GO" id="GO:0005615">
    <property type="term" value="C:extracellular space"/>
    <property type="evidence" value="ECO:0000314"/>
    <property type="project" value="FlyBase"/>
</dbReference>
<dbReference type="GO" id="GO:0019731">
    <property type="term" value="P:antibacterial humoral response"/>
    <property type="evidence" value="ECO:0000304"/>
    <property type="project" value="FlyBase"/>
</dbReference>
<dbReference type="GO" id="GO:0019732">
    <property type="term" value="P:antifungal humoral response"/>
    <property type="evidence" value="ECO:0000314"/>
    <property type="project" value="UniProtKB"/>
</dbReference>
<dbReference type="GO" id="GO:0061844">
    <property type="term" value="P:antimicrobial humoral immune response mediated by antimicrobial peptide"/>
    <property type="evidence" value="ECO:0000314"/>
    <property type="project" value="UniProtKB"/>
</dbReference>
<dbReference type="GO" id="GO:0006952">
    <property type="term" value="P:defense response"/>
    <property type="evidence" value="ECO:0000314"/>
    <property type="project" value="FlyBase"/>
</dbReference>
<dbReference type="GO" id="GO:0050832">
    <property type="term" value="P:defense response to fungus"/>
    <property type="evidence" value="ECO:0000314"/>
    <property type="project" value="FlyBase"/>
</dbReference>
<dbReference type="GO" id="GO:0050829">
    <property type="term" value="P:defense response to Gram-negative bacterium"/>
    <property type="evidence" value="ECO:0000304"/>
    <property type="project" value="FlyBase"/>
</dbReference>
<dbReference type="GO" id="GO:0042832">
    <property type="term" value="P:defense response to protozoan"/>
    <property type="evidence" value="ECO:0000314"/>
    <property type="project" value="FlyBase"/>
</dbReference>
<dbReference type="GO" id="GO:0031640">
    <property type="term" value="P:killing of cells of another organism"/>
    <property type="evidence" value="ECO:0007669"/>
    <property type="project" value="UniProtKB-KW"/>
</dbReference>
<dbReference type="GO" id="GO:0009617">
    <property type="term" value="P:response to bacterium"/>
    <property type="evidence" value="ECO:0000314"/>
    <property type="project" value="FlyBase"/>
</dbReference>
<dbReference type="GO" id="GO:0009611">
    <property type="term" value="P:response to wounding"/>
    <property type="evidence" value="ECO:0000270"/>
    <property type="project" value="FlyBase"/>
</dbReference>
<dbReference type="CDD" id="cd23106">
    <property type="entry name" value="neurotoxins_LC_scorpion"/>
    <property type="match status" value="1"/>
</dbReference>
<dbReference type="FunFam" id="3.30.30.10:FF:000001">
    <property type="entry name" value="Drosomycin 13"/>
    <property type="match status" value="1"/>
</dbReference>
<dbReference type="Gene3D" id="3.30.30.10">
    <property type="entry name" value="Knottin, scorpion toxin-like"/>
    <property type="match status" value="1"/>
</dbReference>
<dbReference type="InterPro" id="IPR003614">
    <property type="entry name" value="Scorpion_toxin-like"/>
</dbReference>
<dbReference type="InterPro" id="IPR036574">
    <property type="entry name" value="Scorpion_toxin-like_sf"/>
</dbReference>
<dbReference type="Pfam" id="PF00304">
    <property type="entry name" value="Gamma-thionin"/>
    <property type="match status" value="1"/>
</dbReference>
<dbReference type="SMART" id="SM00505">
    <property type="entry name" value="Knot1"/>
    <property type="match status" value="1"/>
</dbReference>
<dbReference type="SUPFAM" id="SSF57095">
    <property type="entry name" value="Scorpion toxin-like"/>
    <property type="match status" value="1"/>
</dbReference>
<organism>
    <name type="scientific">Drosophila melanogaster</name>
    <name type="common">Fruit fly</name>
    <dbReference type="NCBI Taxonomy" id="7227"/>
    <lineage>
        <taxon>Eukaryota</taxon>
        <taxon>Metazoa</taxon>
        <taxon>Ecdysozoa</taxon>
        <taxon>Arthropoda</taxon>
        <taxon>Hexapoda</taxon>
        <taxon>Insecta</taxon>
        <taxon>Pterygota</taxon>
        <taxon>Neoptera</taxon>
        <taxon>Endopterygota</taxon>
        <taxon>Diptera</taxon>
        <taxon>Brachycera</taxon>
        <taxon>Muscomorpha</taxon>
        <taxon>Ephydroidea</taxon>
        <taxon>Drosophilidae</taxon>
        <taxon>Drosophila</taxon>
        <taxon>Sophophora</taxon>
    </lineage>
</organism>
<comment type="function">
    <text evidence="3 4 7 8">Possesses antifungal activity and is active against a relatively broad spectrum of filamentous fungi (PubMed:12872120, PubMed:8808632). It inhibits spore germination at high concentrations and at low concentrations delays growth of hyphae which subsequently exhibit abnormal morphology (PubMed:7806546). Spz C-106 in the hemolymph controls expression of the antifungal peptide by acting as a ligand of Tl and inducing an intracellular signaling pathway (PubMed:8808632). Part of a psh-dependent Toll pathway, which may function in activating the systematic immune response in response to localized melanization of the tracheal system (PubMed:18854145).</text>
</comment>
<comment type="subcellular location">
    <subcellularLocation>
        <location evidence="9">Secreted</location>
    </subcellularLocation>
</comment>
<comment type="tissue specificity">
    <text evidence="6 9">Hemolymph (at protein level) (PubMed:9736738). Synthesized in the fat body and is secreted into the blood (PubMed:9736738). In larvae, expressed in the visceral branches and posterior spiracles of the trachea (PubMed:22022271).</text>
</comment>
<comment type="induction">
    <text evidence="4 5 6 9">By bacterial infection (at protein level) (PubMed:9736738). In hemolymph 6 hours after bacterial infection, levels of expression increase for first 24 hours and persist for the following three weeks (at protein level) (PubMed:9736738). Up-regulated by septic injury caused by the Gram-positive bacterium M.luteus and the fungus C.albicans, and by M.luteus or E.faecalis-derived peptidoglycans and by B.subtilis or A.oryzae proteases (PubMed:19590012). Up-regulated by Gram-negative bacteria in the respiratory epithelium (PubMed:22022271). Up-regulated in the trachea and fat body in response to tracheal melanization, either by spontaneous melanization or melanization resulting from infection by bacteria (E.coli and M.luteus) or the fungus B.bassiana (PubMed:18854145).</text>
</comment>
<comment type="mass spectrometry"/>